<protein>
    <recommendedName>
        <fullName evidence="1">ATP phosphoribosyltransferase regulatory subunit</fullName>
    </recommendedName>
</protein>
<evidence type="ECO:0000255" key="1">
    <source>
        <dbReference type="HAMAP-Rule" id="MF_00125"/>
    </source>
</evidence>
<evidence type="ECO:0000305" key="2"/>
<evidence type="ECO:0007829" key="3">
    <source>
        <dbReference type="PDB" id="6FTT"/>
    </source>
</evidence>
<evidence type="ECO:0007829" key="4">
    <source>
        <dbReference type="PDB" id="7Z6R"/>
    </source>
</evidence>
<keyword id="KW-0002">3D-structure</keyword>
<keyword id="KW-0028">Amino-acid biosynthesis</keyword>
<keyword id="KW-0963">Cytoplasm</keyword>
<keyword id="KW-0368">Histidine biosynthesis</keyword>
<keyword id="KW-1185">Reference proteome</keyword>
<name>HISZ_PSYA2</name>
<accession>Q4FTX3</accession>
<proteinExistence type="evidence at protein level"/>
<comment type="function">
    <text evidence="1">Required for the first step of histidine biosynthesis. May allow the feedback regulation of ATP phosphoribosyltransferase activity by histidine.</text>
</comment>
<comment type="pathway">
    <text evidence="1">Amino-acid biosynthesis; L-histidine biosynthesis; L-histidine from 5-phospho-alpha-D-ribose 1-diphosphate: step 1/9.</text>
</comment>
<comment type="subunit">
    <text evidence="1">Heteromultimer composed of HisG and HisZ subunits.</text>
</comment>
<comment type="subcellular location">
    <subcellularLocation>
        <location evidence="1">Cytoplasm</location>
    </subcellularLocation>
</comment>
<comment type="miscellaneous">
    <text>This function is generally fulfilled by the C-terminal part of HisG, which is missing in some bacteria such as this one.</text>
</comment>
<comment type="similarity">
    <text evidence="1">Belongs to the class-II aminoacyl-tRNA synthetase family. HisZ subfamily.</text>
</comment>
<comment type="sequence caution" evidence="2">
    <conflict type="erroneous initiation">
        <sequence resource="EMBL-CDS" id="AAZ18535"/>
    </conflict>
</comment>
<reference key="1">
    <citation type="journal article" date="2010" name="Appl. Environ. Microbiol.">
        <title>The genome sequence of Psychrobacter arcticus 273-4, a psychroactive Siberian permafrost bacterium, reveals mechanisms for adaptation to low-temperature growth.</title>
        <authorList>
            <person name="Ayala-del-Rio H.L."/>
            <person name="Chain P.S."/>
            <person name="Grzymski J.J."/>
            <person name="Ponder M.A."/>
            <person name="Ivanova N."/>
            <person name="Bergholz P.W."/>
            <person name="Di Bartolo G."/>
            <person name="Hauser L."/>
            <person name="Land M."/>
            <person name="Bakermans C."/>
            <person name="Rodrigues D."/>
            <person name="Klappenbach J."/>
            <person name="Zarka D."/>
            <person name="Larimer F."/>
            <person name="Richardson P."/>
            <person name="Murray A."/>
            <person name="Thomashow M."/>
            <person name="Tiedje J.M."/>
        </authorList>
    </citation>
    <scope>NUCLEOTIDE SEQUENCE [LARGE SCALE GENOMIC DNA]</scope>
    <source>
        <strain>DSM 17307 / VKM B-2377 / 273-4</strain>
    </source>
</reference>
<gene>
    <name evidence="1" type="primary">hisZ</name>
    <name type="ordered locus">Psyc_0676</name>
</gene>
<feature type="chain" id="PRO_0000242851" description="ATP phosphoribosyltransferase regulatory subunit">
    <location>
        <begin position="1"/>
        <end position="387"/>
    </location>
</feature>
<feature type="helix" evidence="3">
    <location>
        <begin position="12"/>
        <end position="30"/>
    </location>
</feature>
<feature type="strand" evidence="3">
    <location>
        <begin position="34"/>
        <end position="37"/>
    </location>
</feature>
<feature type="strand" evidence="3">
    <location>
        <begin position="40"/>
        <end position="43"/>
    </location>
</feature>
<feature type="helix" evidence="3">
    <location>
        <begin position="44"/>
        <end position="47"/>
    </location>
</feature>
<feature type="turn" evidence="3">
    <location>
        <begin position="48"/>
        <end position="50"/>
    </location>
</feature>
<feature type="helix" evidence="3">
    <location>
        <begin position="53"/>
        <end position="58"/>
    </location>
</feature>
<feature type="strand" evidence="3">
    <location>
        <begin position="61"/>
        <end position="63"/>
    </location>
</feature>
<feature type="turn" evidence="3">
    <location>
        <begin position="65"/>
        <end position="67"/>
    </location>
</feature>
<feature type="strand" evidence="3">
    <location>
        <begin position="70"/>
        <end position="73"/>
    </location>
</feature>
<feature type="helix" evidence="3">
    <location>
        <begin position="78"/>
        <end position="88"/>
    </location>
</feature>
<feature type="strand" evidence="3">
    <location>
        <begin position="94"/>
        <end position="101"/>
    </location>
</feature>
<feature type="strand" evidence="3">
    <location>
        <begin position="117"/>
        <end position="125"/>
    </location>
</feature>
<feature type="helix" evidence="3">
    <location>
        <begin position="129"/>
        <end position="145"/>
    </location>
</feature>
<feature type="strand" evidence="3">
    <location>
        <begin position="152"/>
        <end position="158"/>
    </location>
</feature>
<feature type="helix" evidence="3">
    <location>
        <begin position="160"/>
        <end position="168"/>
    </location>
</feature>
<feature type="helix" evidence="3">
    <location>
        <begin position="173"/>
        <end position="184"/>
    </location>
</feature>
<feature type="helix" evidence="3">
    <location>
        <begin position="188"/>
        <end position="196"/>
    </location>
</feature>
<feature type="helix" evidence="3">
    <location>
        <begin position="201"/>
        <end position="210"/>
    </location>
</feature>
<feature type="helix" evidence="3">
    <location>
        <begin position="214"/>
        <end position="216"/>
    </location>
</feature>
<feature type="helix" evidence="3">
    <location>
        <begin position="217"/>
        <end position="220"/>
    </location>
</feature>
<feature type="helix" evidence="3">
    <location>
        <begin position="223"/>
        <end position="227"/>
    </location>
</feature>
<feature type="helix" evidence="3">
    <location>
        <begin position="229"/>
        <end position="249"/>
    </location>
</feature>
<feature type="strand" evidence="3">
    <location>
        <begin position="253"/>
        <end position="255"/>
    </location>
</feature>
<feature type="turn" evidence="3">
    <location>
        <begin position="261"/>
        <end position="265"/>
    </location>
</feature>
<feature type="strand" evidence="3">
    <location>
        <begin position="266"/>
        <end position="275"/>
    </location>
</feature>
<feature type="strand" evidence="3">
    <location>
        <begin position="282"/>
        <end position="289"/>
    </location>
</feature>
<feature type="strand" evidence="3">
    <location>
        <begin position="303"/>
        <end position="310"/>
    </location>
</feature>
<feature type="helix" evidence="3">
    <location>
        <begin position="311"/>
        <end position="314"/>
    </location>
</feature>
<feature type="turn" evidence="3">
    <location>
        <begin position="315"/>
        <end position="317"/>
    </location>
</feature>
<feature type="strand" evidence="3">
    <location>
        <begin position="325"/>
        <end position="328"/>
    </location>
</feature>
<feature type="helix" evidence="3">
    <location>
        <begin position="330"/>
        <end position="335"/>
    </location>
</feature>
<feature type="helix" evidence="3">
    <location>
        <begin position="338"/>
        <end position="354"/>
    </location>
</feature>
<feature type="strand" evidence="3">
    <location>
        <begin position="357"/>
        <end position="359"/>
    </location>
</feature>
<feature type="strand" evidence="4">
    <location>
        <begin position="362"/>
        <end position="365"/>
    </location>
</feature>
<feature type="strand" evidence="3">
    <location>
        <begin position="373"/>
        <end position="377"/>
    </location>
</feature>
<feature type="strand" evidence="3">
    <location>
        <begin position="382"/>
        <end position="386"/>
    </location>
</feature>
<sequence length="387" mass="43028">MLPDGVADVLFEDAHKQEVLRHQLTQQLITHGYQLVSPPMIEFTESLLSGASEDLKRQTFKIIDQLTGRLMGIRADITPQILRIDAHHGGDGIARYCYAGDVIHTLPSGLFGSRTPLQLGAEIFGCESIAADIELIDVLFSMINSLDMSAVLHVDLGHVTIFKRLAELAALSASDTEQLMQLYANKNLPELKQVCQVLPMGSDFYTLARFGHDIANLLGRLSENAQQDTKIVTAIDELQRLKAHLQVQWQCAVSIDVTELSGYHYHTGIVFNGYINSETQPLVRGGRFDGMKSNQLATNQPRQATGFSMDVSRLLAHTQLDAPFIVLIDYDAFNNLDSAQRQLLLQQVASLRQQGYRVTMPLTAEDMPVGLTHRLSLADNQWRLHAV</sequence>
<dbReference type="EMBL" id="CP000082">
    <property type="protein sequence ID" value="AAZ18535.1"/>
    <property type="status" value="ALT_INIT"/>
    <property type="molecule type" value="Genomic_DNA"/>
</dbReference>
<dbReference type="RefSeq" id="WP_011279962.1">
    <property type="nucleotide sequence ID" value="NC_007204.1"/>
</dbReference>
<dbReference type="PDB" id="5M8H">
    <property type="method" value="X-ray"/>
    <property type="resolution" value="2.34 A"/>
    <property type="chains" value="A/B/C/D=1-387"/>
</dbReference>
<dbReference type="PDB" id="6FTT">
    <property type="method" value="X-ray"/>
    <property type="resolution" value="2.29 A"/>
    <property type="chains" value="A/B/C/D=1-387"/>
</dbReference>
<dbReference type="PDB" id="6FU2">
    <property type="method" value="X-ray"/>
    <property type="resolution" value="2.71 A"/>
    <property type="chains" value="A/B=1-387"/>
</dbReference>
<dbReference type="PDB" id="6FU7">
    <property type="method" value="X-ray"/>
    <property type="resolution" value="2.31 A"/>
    <property type="chains" value="A/B=1-387"/>
</dbReference>
<dbReference type="PDB" id="6FUA">
    <property type="method" value="X-ray"/>
    <property type="resolution" value="2.80 A"/>
    <property type="chains" value="A/B=1-387"/>
</dbReference>
<dbReference type="PDB" id="6R02">
    <property type="method" value="X-ray"/>
    <property type="resolution" value="2.65 A"/>
    <property type="chains" value="A/B/C/D=1-387"/>
</dbReference>
<dbReference type="PDB" id="7Z6R">
    <property type="method" value="X-ray"/>
    <property type="resolution" value="2.55 A"/>
    <property type="chains" value="A/B=1-387"/>
</dbReference>
<dbReference type="PDBsum" id="5M8H"/>
<dbReference type="PDBsum" id="6FTT"/>
<dbReference type="PDBsum" id="6FU2"/>
<dbReference type="PDBsum" id="6FU7"/>
<dbReference type="PDBsum" id="6FUA"/>
<dbReference type="PDBsum" id="6R02"/>
<dbReference type="PDBsum" id="7Z6R"/>
<dbReference type="SMR" id="Q4FTX3"/>
<dbReference type="STRING" id="259536.Psyc_0676"/>
<dbReference type="KEGG" id="par:Psyc_0676"/>
<dbReference type="eggNOG" id="COG3705">
    <property type="taxonomic scope" value="Bacteria"/>
</dbReference>
<dbReference type="HOGENOM" id="CLU_025113_0_1_6"/>
<dbReference type="OrthoDB" id="9769617at2"/>
<dbReference type="UniPathway" id="UPA00031">
    <property type="reaction ID" value="UER00006"/>
</dbReference>
<dbReference type="Proteomes" id="UP000000546">
    <property type="component" value="Chromosome"/>
</dbReference>
<dbReference type="GO" id="GO:0005737">
    <property type="term" value="C:cytoplasm"/>
    <property type="evidence" value="ECO:0007669"/>
    <property type="project" value="UniProtKB-SubCell"/>
</dbReference>
<dbReference type="GO" id="GO:0004821">
    <property type="term" value="F:histidine-tRNA ligase activity"/>
    <property type="evidence" value="ECO:0007669"/>
    <property type="project" value="TreeGrafter"/>
</dbReference>
<dbReference type="GO" id="GO:0006427">
    <property type="term" value="P:histidyl-tRNA aminoacylation"/>
    <property type="evidence" value="ECO:0007669"/>
    <property type="project" value="TreeGrafter"/>
</dbReference>
<dbReference type="GO" id="GO:0000105">
    <property type="term" value="P:L-histidine biosynthetic process"/>
    <property type="evidence" value="ECO:0007669"/>
    <property type="project" value="UniProtKB-UniRule"/>
</dbReference>
<dbReference type="Gene3D" id="3.30.930.10">
    <property type="entry name" value="Bira Bifunctional Protein, Domain 2"/>
    <property type="match status" value="1"/>
</dbReference>
<dbReference type="HAMAP" id="MF_00125">
    <property type="entry name" value="HisZ"/>
    <property type="match status" value="1"/>
</dbReference>
<dbReference type="InterPro" id="IPR045864">
    <property type="entry name" value="aa-tRNA-synth_II/BPL/LPL"/>
</dbReference>
<dbReference type="InterPro" id="IPR041715">
    <property type="entry name" value="HisRS-like_core"/>
</dbReference>
<dbReference type="InterPro" id="IPR004516">
    <property type="entry name" value="HisRS/HisZ"/>
</dbReference>
<dbReference type="InterPro" id="IPR004517">
    <property type="entry name" value="HisZ"/>
</dbReference>
<dbReference type="NCBIfam" id="NF009086">
    <property type="entry name" value="PRK12421.1"/>
    <property type="match status" value="1"/>
</dbReference>
<dbReference type="PANTHER" id="PTHR43707:SF1">
    <property type="entry name" value="HISTIDINE--TRNA LIGASE, MITOCHONDRIAL-RELATED"/>
    <property type="match status" value="1"/>
</dbReference>
<dbReference type="PANTHER" id="PTHR43707">
    <property type="entry name" value="HISTIDYL-TRNA SYNTHETASE"/>
    <property type="match status" value="1"/>
</dbReference>
<dbReference type="Pfam" id="PF13393">
    <property type="entry name" value="tRNA-synt_His"/>
    <property type="match status" value="1"/>
</dbReference>
<dbReference type="PIRSF" id="PIRSF001549">
    <property type="entry name" value="His-tRNA_synth"/>
    <property type="match status" value="1"/>
</dbReference>
<dbReference type="SUPFAM" id="SSF55681">
    <property type="entry name" value="Class II aaRS and biotin synthetases"/>
    <property type="match status" value="1"/>
</dbReference>
<organism>
    <name type="scientific">Psychrobacter arcticus (strain DSM 17307 / VKM B-2377 / 273-4)</name>
    <dbReference type="NCBI Taxonomy" id="259536"/>
    <lineage>
        <taxon>Bacteria</taxon>
        <taxon>Pseudomonadati</taxon>
        <taxon>Pseudomonadota</taxon>
        <taxon>Gammaproteobacteria</taxon>
        <taxon>Moraxellales</taxon>
        <taxon>Moraxellaceae</taxon>
        <taxon>Psychrobacter</taxon>
    </lineage>
</organism>